<name>YR427_MIMIV</name>
<accession>Q5UQM8</accession>
<organism>
    <name type="scientific">Acanthamoeba polyphaga mimivirus</name>
    <name type="common">APMV</name>
    <dbReference type="NCBI Taxonomy" id="212035"/>
    <lineage>
        <taxon>Viruses</taxon>
        <taxon>Varidnaviria</taxon>
        <taxon>Bamfordvirae</taxon>
        <taxon>Nucleocytoviricota</taxon>
        <taxon>Megaviricetes</taxon>
        <taxon>Imitervirales</taxon>
        <taxon>Mimiviridae</taxon>
        <taxon>Megamimivirinae</taxon>
        <taxon>Mimivirus</taxon>
        <taxon>Mimivirus bradfordmassiliense</taxon>
    </lineage>
</organism>
<proteinExistence type="predicted"/>
<reference key="1">
    <citation type="journal article" date="2004" name="Science">
        <title>The 1.2-megabase genome sequence of Mimivirus.</title>
        <authorList>
            <person name="Raoult D."/>
            <person name="Audic S."/>
            <person name="Robert C."/>
            <person name="Abergel C."/>
            <person name="Renesto P."/>
            <person name="Ogata H."/>
            <person name="La Scola B."/>
            <person name="Susan M."/>
            <person name="Claverie J.-M."/>
        </authorList>
    </citation>
    <scope>NUCLEOTIDE SEQUENCE [LARGE SCALE GENOMIC DNA]</scope>
    <source>
        <strain>Rowbotham-Bradford</strain>
    </source>
</reference>
<protein>
    <recommendedName>
        <fullName>Uncharacterized protein R427</fullName>
    </recommendedName>
</protein>
<gene>
    <name type="ordered locus">MIMI_R427</name>
</gene>
<organismHost>
    <name type="scientific">Acanthamoeba polyphaga</name>
    <name type="common">Amoeba</name>
    <dbReference type="NCBI Taxonomy" id="5757"/>
</organismHost>
<keyword id="KW-1185">Reference proteome</keyword>
<feature type="chain" id="PRO_0000253915" description="Uncharacterized protein R427">
    <location>
        <begin position="1"/>
        <end position="120"/>
    </location>
</feature>
<dbReference type="EMBL" id="AY653733">
    <property type="protein sequence ID" value="AAV50696.1"/>
    <property type="molecule type" value="Genomic_DNA"/>
</dbReference>
<dbReference type="SMR" id="Q5UQM8"/>
<dbReference type="KEGG" id="vg:9925048"/>
<dbReference type="Proteomes" id="UP000001134">
    <property type="component" value="Genome"/>
</dbReference>
<sequence>MFLSKLSIMNDSNSRCDCILSQKPIIFNDFNESITNTEYSGTNPVLNVKSIRKDRNLYRKIAHMNYWLQMVDIKLPDNLDIIETIEFLDNALELKGINQDDLIYKIGDIIVGLKISKKIE</sequence>